<evidence type="ECO:0000255" key="1">
    <source>
        <dbReference type="HAMAP-Rule" id="MF_03217"/>
    </source>
</evidence>
<evidence type="ECO:0000256" key="2">
    <source>
        <dbReference type="SAM" id="MobiDB-lite"/>
    </source>
</evidence>
<name>CHO2_PENRW</name>
<keyword id="KW-0256">Endoplasmic reticulum</keyword>
<keyword id="KW-0444">Lipid biosynthesis</keyword>
<keyword id="KW-0443">Lipid metabolism</keyword>
<keyword id="KW-0472">Membrane</keyword>
<keyword id="KW-0489">Methyltransferase</keyword>
<keyword id="KW-0594">Phospholipid biosynthesis</keyword>
<keyword id="KW-1208">Phospholipid metabolism</keyword>
<keyword id="KW-1185">Reference proteome</keyword>
<keyword id="KW-0949">S-adenosyl-L-methionine</keyword>
<keyword id="KW-0808">Transferase</keyword>
<keyword id="KW-0812">Transmembrane</keyword>
<keyword id="KW-1133">Transmembrane helix</keyword>
<accession>B6HJA3</accession>
<reference key="1">
    <citation type="journal article" date="2008" name="Nat. Biotechnol.">
        <title>Genome sequencing and analysis of the filamentous fungus Penicillium chrysogenum.</title>
        <authorList>
            <person name="van den Berg M.A."/>
            <person name="Albang R."/>
            <person name="Albermann K."/>
            <person name="Badger J.H."/>
            <person name="Daran J.-M."/>
            <person name="Driessen A.J.M."/>
            <person name="Garcia-Estrada C."/>
            <person name="Fedorova N.D."/>
            <person name="Harris D.M."/>
            <person name="Heijne W.H.M."/>
            <person name="Joardar V.S."/>
            <person name="Kiel J.A.K.W."/>
            <person name="Kovalchuk A."/>
            <person name="Martin J.F."/>
            <person name="Nierman W.C."/>
            <person name="Nijland J.G."/>
            <person name="Pronk J.T."/>
            <person name="Roubos J.A."/>
            <person name="van der Klei I.J."/>
            <person name="van Peij N.N.M.E."/>
            <person name="Veenhuis M."/>
            <person name="von Doehren H."/>
            <person name="Wagner C."/>
            <person name="Wortman J.R."/>
            <person name="Bovenberg R.A.L."/>
        </authorList>
    </citation>
    <scope>NUCLEOTIDE SEQUENCE [LARGE SCALE GENOMIC DNA]</scope>
    <source>
        <strain>ATCC 28089 / DSM 1075 / NRRL 1951 / Wisconsin 54-1255</strain>
    </source>
</reference>
<protein>
    <recommendedName>
        <fullName evidence="1">Phosphatidylethanolamine N-methyltransferase</fullName>
        <shortName evidence="1">PE methyltransferase</shortName>
        <shortName evidence="1">PEAMT</shortName>
        <shortName evidence="1">PEMT</shortName>
        <ecNumber evidence="1">2.1.1.17</ecNumber>
    </recommendedName>
</protein>
<proteinExistence type="inferred from homology"/>
<comment type="function">
    <text evidence="1">Catalyzes the first step of the methylation pathway of phosphatidylcholine biosynthesis, the SAM-dependent methylation of phosphatidylethanolamine (PE) to phosphatidylmonomethylethanolamine (PMME).</text>
</comment>
<comment type="catalytic activity">
    <reaction evidence="1">
        <text>a 1,2-diacyl-sn-glycero-3-phosphoethanolamine + S-adenosyl-L-methionine = a 1,2-diacyl-sn-glycero-3-phospho-N-methylethanolamine + S-adenosyl-L-homocysteine + H(+)</text>
        <dbReference type="Rhea" id="RHEA:11164"/>
        <dbReference type="ChEBI" id="CHEBI:15378"/>
        <dbReference type="ChEBI" id="CHEBI:57856"/>
        <dbReference type="ChEBI" id="CHEBI:59789"/>
        <dbReference type="ChEBI" id="CHEBI:64573"/>
        <dbReference type="ChEBI" id="CHEBI:64612"/>
        <dbReference type="EC" id="2.1.1.17"/>
    </reaction>
</comment>
<comment type="pathway">
    <text evidence="1">Phospholipid metabolism; phosphatidylcholine biosynthesis.</text>
</comment>
<comment type="subcellular location">
    <subcellularLocation>
        <location evidence="1">Endoplasmic reticulum membrane</location>
        <topology evidence="1">Multi-pass membrane protein</topology>
    </subcellularLocation>
</comment>
<comment type="similarity">
    <text evidence="1">Belongs to the class VI-like SAM-binding methyltransferase superfamily. CHO2 family.</text>
</comment>
<organism>
    <name type="scientific">Penicillium rubens (strain ATCC 28089 / DSM 1075 / NRRL 1951 / Wisconsin 54-1255)</name>
    <name type="common">Penicillium chrysogenum</name>
    <dbReference type="NCBI Taxonomy" id="500485"/>
    <lineage>
        <taxon>Eukaryota</taxon>
        <taxon>Fungi</taxon>
        <taxon>Dikarya</taxon>
        <taxon>Ascomycota</taxon>
        <taxon>Pezizomycotina</taxon>
        <taxon>Eurotiomycetes</taxon>
        <taxon>Eurotiomycetidae</taxon>
        <taxon>Eurotiales</taxon>
        <taxon>Aspergillaceae</taxon>
        <taxon>Penicillium</taxon>
        <taxon>Penicillium chrysogenum species complex</taxon>
    </lineage>
</organism>
<sequence length="977" mass="110184">MDQGLSTGAHQDTDGLRERNTRVDSTVGREALTAVGEGEIKDKDGKASKTFGRTPDGTVFTVPQTHDMVSQLLLPSEPKNFGDLVVLILLAGHIMFLWALPAGAKIPIFAVTYLFWRLAYNAGIGWLLHNQSHHKTLIRWAEKTKVFVNPATGENPHPKLYNWIKRELETKIPQDYSFDNAPIEYNTWLVFRRLVDLILMCDFTSYCLFAIACGHQPVDESILMTVLRWSAGIVLVLFNLWVKLDAHRVVKDYAWYWGDFFYLIDQELTFDGVFEMAPHPMYSVGYAGYYGISLMAASYKVLFISIIAHAAQFAFLVLVENPHIDKTYNPPPPRKRSSTCADSSSTLPTDLDTPTAPTPSEDQTPNATYSYSVKPPQPVHNLLGLHNLDLYRTTDSSIMLVQLLVFSITALTPSTPWYQLLFVVLAAISRIWYSVGIGYILRNQSNTKSWTRHFVKYGDTPQEAWNQWKGTYHLSMILCYSSFIAAVWKMYTFPADWGYGLVLFRHVLGAGLISLQIWTSVSIYESLGEFGWFYGDFFFDDSPKLTYNGIYRFLNNPERVLGLAGVWGAVLITSSGAVTFLALLSHILSLAFIQFVERPHMQKLYGRSLRQDAGLVKSLKRSLPPSLKQLHGSVDKMFDDSFEFIEEMLDNARPKLAAGVNTFVKDTTALFQKYPARVTIARIDADLAGFDVRDYALSVEGTSALSFEESEKNKGREGANARMPLDRRGDLKDLTFEYGSPIRVKWTAPLHHSKKDWIGLYRVTDNTSREVTRVSSQGRWVATNEGAYDNLTCEKGILTSDVVIPSSERQGQDPCEFASGEIVFAGDKLFWTQGVFELRYHHNGMHNVMAISRPFEIRIRRSDEDETISDGDSFVESAVENALLPVVRNCFDRDPEIAPETVDEQFGTLVERDGKFAKRVVFAVHQMFGIELAAEVVKADGNVRNLAWRICNAKKVLAPYSMSRSNGTTTPLEESKE</sequence>
<feature type="chain" id="PRO_0000405904" description="Phosphatidylethanolamine N-methyltransferase">
    <location>
        <begin position="1"/>
        <end position="977"/>
    </location>
</feature>
<feature type="topological domain" description="Lumenal" evidence="1">
    <location>
        <begin position="1"/>
        <end position="83"/>
    </location>
</feature>
<feature type="transmembrane region" description="Helical" evidence="1">
    <location>
        <begin position="84"/>
        <end position="104"/>
    </location>
</feature>
<feature type="topological domain" description="Cytoplasmic" evidence="1">
    <location>
        <begin position="105"/>
        <end position="107"/>
    </location>
</feature>
<feature type="transmembrane region" description="Helical" evidence="1">
    <location>
        <begin position="108"/>
        <end position="128"/>
    </location>
</feature>
<feature type="topological domain" description="Lumenal" evidence="1">
    <location>
        <begin position="129"/>
        <end position="193"/>
    </location>
</feature>
<feature type="transmembrane region" description="Helical" evidence="1">
    <location>
        <begin position="194"/>
        <end position="214"/>
    </location>
</feature>
<feature type="topological domain" description="Cytoplasmic" evidence="1">
    <location>
        <begin position="215"/>
        <end position="221"/>
    </location>
</feature>
<feature type="transmembrane region" description="Helical" evidence="1">
    <location>
        <begin position="222"/>
        <end position="242"/>
    </location>
</feature>
<feature type="topological domain" description="Lumenal" evidence="1">
    <location>
        <begin position="243"/>
        <end position="275"/>
    </location>
</feature>
<feature type="transmembrane region" description="Helical" evidence="1">
    <location>
        <begin position="276"/>
        <end position="296"/>
    </location>
</feature>
<feature type="topological domain" description="Cytoplasmic" evidence="1">
    <location>
        <begin position="297"/>
        <end position="298"/>
    </location>
</feature>
<feature type="transmembrane region" description="Helical" evidence="1">
    <location>
        <begin position="299"/>
        <end position="319"/>
    </location>
</feature>
<feature type="topological domain" description="Lumenal" evidence="1">
    <location>
        <begin position="320"/>
        <end position="397"/>
    </location>
</feature>
<feature type="transmembrane region" description="Helical" evidence="1">
    <location>
        <begin position="398"/>
        <end position="418"/>
    </location>
</feature>
<feature type="topological domain" description="Cytoplasmic" evidence="1">
    <location>
        <position position="419"/>
    </location>
</feature>
<feature type="transmembrane region" description="Helical" evidence="1">
    <location>
        <begin position="420"/>
        <end position="440"/>
    </location>
</feature>
<feature type="topological domain" description="Lumenal" evidence="1">
    <location>
        <begin position="441"/>
        <end position="469"/>
    </location>
</feature>
<feature type="transmembrane region" description="Helical" evidence="1">
    <location>
        <begin position="470"/>
        <end position="492"/>
    </location>
</feature>
<feature type="topological domain" description="Cytoplasmic" evidence="1">
    <location>
        <begin position="493"/>
        <end position="506"/>
    </location>
</feature>
<feature type="transmembrane region" description="Helical" evidence="1">
    <location>
        <begin position="507"/>
        <end position="527"/>
    </location>
</feature>
<feature type="topological domain" description="Lumenal" evidence="1">
    <location>
        <begin position="528"/>
        <end position="575"/>
    </location>
</feature>
<feature type="transmembrane region" description="Helical" evidence="1">
    <location>
        <begin position="576"/>
        <end position="596"/>
    </location>
</feature>
<feature type="topological domain" description="Cytoplasmic" evidence="1">
    <location>
        <begin position="597"/>
        <end position="977"/>
    </location>
</feature>
<feature type="region of interest" description="Disordered" evidence="2">
    <location>
        <begin position="1"/>
        <end position="23"/>
    </location>
</feature>
<feature type="region of interest" description="Disordered" evidence="2">
    <location>
        <begin position="328"/>
        <end position="370"/>
    </location>
</feature>
<feature type="compositionally biased region" description="Polar residues" evidence="2">
    <location>
        <begin position="1"/>
        <end position="10"/>
    </location>
</feature>
<feature type="compositionally biased region" description="Basic and acidic residues" evidence="2">
    <location>
        <begin position="11"/>
        <end position="22"/>
    </location>
</feature>
<feature type="compositionally biased region" description="Low complexity" evidence="2">
    <location>
        <begin position="341"/>
        <end position="360"/>
    </location>
</feature>
<feature type="compositionally biased region" description="Polar residues" evidence="2">
    <location>
        <begin position="361"/>
        <end position="370"/>
    </location>
</feature>
<gene>
    <name type="primary">cho2</name>
    <name type="ORF">Pc21g02080</name>
</gene>
<dbReference type="EC" id="2.1.1.17" evidence="1"/>
<dbReference type="EMBL" id="AM920436">
    <property type="protein sequence ID" value="CAP95105.1"/>
    <property type="molecule type" value="Genomic_DNA"/>
</dbReference>
<dbReference type="RefSeq" id="XP_002567273.1">
    <property type="nucleotide sequence ID" value="XM_002567227.1"/>
</dbReference>
<dbReference type="SMR" id="B6HJA3"/>
<dbReference type="STRING" id="500485.B6HJA3"/>
<dbReference type="GeneID" id="8305417"/>
<dbReference type="KEGG" id="pcs:N7525_006724"/>
<dbReference type="VEuPathDB" id="FungiDB:PCH_Pc21g02080"/>
<dbReference type="eggNOG" id="ENOG502QRGH">
    <property type="taxonomic scope" value="Eukaryota"/>
</dbReference>
<dbReference type="HOGENOM" id="CLU_005987_0_0_1"/>
<dbReference type="OMA" id="RIWYSVG"/>
<dbReference type="OrthoDB" id="4583at2759"/>
<dbReference type="BioCyc" id="PCHR:PC21G02080-MONOMER"/>
<dbReference type="UniPathway" id="UPA00753"/>
<dbReference type="Proteomes" id="UP000000724">
    <property type="component" value="Contig Pc00c21"/>
</dbReference>
<dbReference type="GO" id="GO:0005789">
    <property type="term" value="C:endoplasmic reticulum membrane"/>
    <property type="evidence" value="ECO:0007669"/>
    <property type="project" value="UniProtKB-SubCell"/>
</dbReference>
<dbReference type="GO" id="GO:0004608">
    <property type="term" value="F:phosphatidylethanolamine N-methyltransferase activity"/>
    <property type="evidence" value="ECO:0007669"/>
    <property type="project" value="UniProtKB-UniRule"/>
</dbReference>
<dbReference type="GO" id="GO:0032259">
    <property type="term" value="P:methylation"/>
    <property type="evidence" value="ECO:0007669"/>
    <property type="project" value="UniProtKB-KW"/>
</dbReference>
<dbReference type="GO" id="GO:0006656">
    <property type="term" value="P:phosphatidylcholine biosynthetic process"/>
    <property type="evidence" value="ECO:0007669"/>
    <property type="project" value="UniProtKB-UniRule"/>
</dbReference>
<dbReference type="FunFam" id="2.60.40.2840:FF:000006">
    <property type="entry name" value="Phosphatidylethanolamine N-methyltransferase"/>
    <property type="match status" value="1"/>
</dbReference>
<dbReference type="Gene3D" id="2.60.40.2840">
    <property type="match status" value="1"/>
</dbReference>
<dbReference type="HAMAP" id="MF_03217">
    <property type="entry name" value="PEMT"/>
    <property type="match status" value="1"/>
</dbReference>
<dbReference type="InterPro" id="IPR007318">
    <property type="entry name" value="Phopholipid_MeTrfase"/>
</dbReference>
<dbReference type="InterPro" id="IPR016219">
    <property type="entry name" value="Phosphatid-EA_MeTrfase_fun"/>
</dbReference>
<dbReference type="PANTHER" id="PTHR32138">
    <property type="entry name" value="PHOSPHATIDYLETHANOLAMINE N-METHYLTRANSFERASE"/>
    <property type="match status" value="1"/>
</dbReference>
<dbReference type="PANTHER" id="PTHR32138:SF0">
    <property type="entry name" value="PHOSPHATIDYLETHANOLAMINE N-METHYLTRANSFERASE"/>
    <property type="match status" value="1"/>
</dbReference>
<dbReference type="Pfam" id="PF04191">
    <property type="entry name" value="PEMT"/>
    <property type="match status" value="2"/>
</dbReference>
<dbReference type="PIRSF" id="PIRSF000383">
    <property type="entry name" value="PEAMT"/>
    <property type="match status" value="1"/>
</dbReference>
<dbReference type="PROSITE" id="PS51598">
    <property type="entry name" value="SAM_CHO2"/>
    <property type="match status" value="1"/>
</dbReference>